<name>MATK_SIMCH</name>
<feature type="chain" id="PRO_0000143708" description="Maturase K">
    <location>
        <begin position="1"/>
        <end position="504"/>
    </location>
</feature>
<reference key="1">
    <citation type="journal article" date="2005" name="Ann. Mo. Bot. Gard.">
        <title>Phylogenetics of Amaranthaceae based on matK/trnK sequence data -- evidence from parsimony, likelihood, and Bayesian analyses.</title>
        <authorList>
            <person name="Mueller K.F."/>
            <person name="Borsch T."/>
        </authorList>
    </citation>
    <scope>NUCLEOTIDE SEQUENCE [GENOMIC DNA]</scope>
</reference>
<evidence type="ECO:0000255" key="1">
    <source>
        <dbReference type="HAMAP-Rule" id="MF_01390"/>
    </source>
</evidence>
<sequence length="504" mass="60088">MEKFQGYLELDRSWKHDFLYPLIFQEYIYAFAHDHGLNRYILLENVSYDRKYSFLIVKRLITRMYQQNHLILSANDSNQNEFFGHKKNLYSQMISEGFAVIVEIPFSLRLISSLAGKEIVKFHNLRSIHSIFPFLEDKFSHLNYILDIRIPYPVHIEILVQTLRSWVKDAPSLHLLRLFLYEYHNWNSIITSNKSISIFSKGNQRLFLFLYNSHIWEYESLFVFFRNQSSHLRSTSSGALLGRSYFYGKLENLVKVFTKDLPVILRFCKDPFMHYVRYQEKSILASKGTFYLMNKWKYYLVNLWQCHFSVWSQPRRIYINQLSKNSLDFMGFLSNVRLNLSVVRSQMLENSFIMDKPIKKFDTIVPIITMIRSLTKAKFCTVLGHPISKPVWADLLDSDIIERFGRICRNLFHYYSGSSRKKSLYRIKYILRLSCVRTLARKHQSTVRAFLKKLGSDFLEEFFTEEEKVLSLILSRDFSISQKLYRGRVWYLDIICIHDLANHS</sequence>
<protein>
    <recommendedName>
        <fullName evidence="1">Maturase K</fullName>
    </recommendedName>
    <alternativeName>
        <fullName evidence="1">Intron maturase</fullName>
    </alternativeName>
</protein>
<dbReference type="EMBL" id="AY514854">
    <property type="protein sequence ID" value="AAT28284.1"/>
    <property type="molecule type" value="Genomic_DNA"/>
</dbReference>
<dbReference type="GO" id="GO:0009507">
    <property type="term" value="C:chloroplast"/>
    <property type="evidence" value="ECO:0007669"/>
    <property type="project" value="UniProtKB-SubCell"/>
</dbReference>
<dbReference type="GO" id="GO:0003723">
    <property type="term" value="F:RNA binding"/>
    <property type="evidence" value="ECO:0007669"/>
    <property type="project" value="UniProtKB-KW"/>
</dbReference>
<dbReference type="GO" id="GO:0006397">
    <property type="term" value="P:mRNA processing"/>
    <property type="evidence" value="ECO:0007669"/>
    <property type="project" value="UniProtKB-KW"/>
</dbReference>
<dbReference type="GO" id="GO:0008380">
    <property type="term" value="P:RNA splicing"/>
    <property type="evidence" value="ECO:0007669"/>
    <property type="project" value="UniProtKB-UniRule"/>
</dbReference>
<dbReference type="GO" id="GO:0008033">
    <property type="term" value="P:tRNA processing"/>
    <property type="evidence" value="ECO:0007669"/>
    <property type="project" value="UniProtKB-KW"/>
</dbReference>
<dbReference type="HAMAP" id="MF_01390">
    <property type="entry name" value="MatK"/>
    <property type="match status" value="1"/>
</dbReference>
<dbReference type="InterPro" id="IPR024937">
    <property type="entry name" value="Domain_X"/>
</dbReference>
<dbReference type="InterPro" id="IPR002866">
    <property type="entry name" value="Maturase_MatK"/>
</dbReference>
<dbReference type="InterPro" id="IPR024942">
    <property type="entry name" value="Maturase_MatK_N"/>
</dbReference>
<dbReference type="PANTHER" id="PTHR34811">
    <property type="entry name" value="MATURASE K"/>
    <property type="match status" value="1"/>
</dbReference>
<dbReference type="PANTHER" id="PTHR34811:SF1">
    <property type="entry name" value="MATURASE K"/>
    <property type="match status" value="1"/>
</dbReference>
<dbReference type="Pfam" id="PF01348">
    <property type="entry name" value="Intron_maturas2"/>
    <property type="match status" value="1"/>
</dbReference>
<dbReference type="Pfam" id="PF01824">
    <property type="entry name" value="MatK_N"/>
    <property type="match status" value="1"/>
</dbReference>
<gene>
    <name evidence="1" type="primary">matK</name>
</gene>
<accession>Q5J2V4</accession>
<geneLocation type="chloroplast"/>
<keyword id="KW-0150">Chloroplast</keyword>
<keyword id="KW-0507">mRNA processing</keyword>
<keyword id="KW-0934">Plastid</keyword>
<keyword id="KW-0694">RNA-binding</keyword>
<keyword id="KW-0819">tRNA processing</keyword>
<comment type="function">
    <text evidence="1">Usually encoded in the trnK tRNA gene intron. Probably assists in splicing its own and other chloroplast group II introns.</text>
</comment>
<comment type="subcellular location">
    <subcellularLocation>
        <location>Plastid</location>
        <location>Chloroplast</location>
    </subcellularLocation>
</comment>
<comment type="similarity">
    <text evidence="1">Belongs to the intron maturase 2 family. MatK subfamily.</text>
</comment>
<organism>
    <name type="scientific">Simmondsia chinensis</name>
    <name type="common">Jojoba</name>
    <name type="synonym">Buxus chinensis</name>
    <dbReference type="NCBI Taxonomy" id="3999"/>
    <lineage>
        <taxon>Eukaryota</taxon>
        <taxon>Viridiplantae</taxon>
        <taxon>Streptophyta</taxon>
        <taxon>Embryophyta</taxon>
        <taxon>Tracheophyta</taxon>
        <taxon>Spermatophyta</taxon>
        <taxon>Magnoliopsida</taxon>
        <taxon>eudicotyledons</taxon>
        <taxon>Gunneridae</taxon>
        <taxon>Pentapetalae</taxon>
        <taxon>Caryophyllales</taxon>
        <taxon>Simmondsiaceae</taxon>
        <taxon>Simmondsia</taxon>
    </lineage>
</organism>
<proteinExistence type="inferred from homology"/>